<feature type="chain" id="PRO_0000319187" description="Formate-dependent phosphoribosylglycinamide formyltransferase">
    <location>
        <begin position="1"/>
        <end position="400"/>
    </location>
</feature>
<feature type="domain" description="ATP-grasp" evidence="1">
    <location>
        <begin position="119"/>
        <end position="313"/>
    </location>
</feature>
<feature type="binding site" evidence="1">
    <location>
        <begin position="21"/>
        <end position="22"/>
    </location>
    <ligand>
        <name>N(1)-(5-phospho-beta-D-ribosyl)glycinamide</name>
        <dbReference type="ChEBI" id="CHEBI:143788"/>
    </ligand>
</feature>
<feature type="binding site" evidence="1">
    <location>
        <position position="81"/>
    </location>
    <ligand>
        <name>N(1)-(5-phospho-beta-D-ribosyl)glycinamide</name>
        <dbReference type="ChEBI" id="CHEBI:143788"/>
    </ligand>
</feature>
<feature type="binding site" evidence="1">
    <location>
        <position position="114"/>
    </location>
    <ligand>
        <name>ATP</name>
        <dbReference type="ChEBI" id="CHEBI:30616"/>
    </ligand>
</feature>
<feature type="binding site" evidence="1">
    <location>
        <position position="155"/>
    </location>
    <ligand>
        <name>ATP</name>
        <dbReference type="ChEBI" id="CHEBI:30616"/>
    </ligand>
</feature>
<feature type="binding site" evidence="1">
    <location>
        <begin position="160"/>
        <end position="165"/>
    </location>
    <ligand>
        <name>ATP</name>
        <dbReference type="ChEBI" id="CHEBI:30616"/>
    </ligand>
</feature>
<feature type="binding site" evidence="1">
    <location>
        <begin position="195"/>
        <end position="198"/>
    </location>
    <ligand>
        <name>ATP</name>
        <dbReference type="ChEBI" id="CHEBI:30616"/>
    </ligand>
</feature>
<feature type="binding site" evidence="1">
    <location>
        <position position="203"/>
    </location>
    <ligand>
        <name>ATP</name>
        <dbReference type="ChEBI" id="CHEBI:30616"/>
    </ligand>
</feature>
<feature type="binding site" evidence="1">
    <location>
        <position position="272"/>
    </location>
    <ligand>
        <name>Mg(2+)</name>
        <dbReference type="ChEBI" id="CHEBI:18420"/>
    </ligand>
</feature>
<feature type="binding site" evidence="1">
    <location>
        <position position="284"/>
    </location>
    <ligand>
        <name>Mg(2+)</name>
        <dbReference type="ChEBI" id="CHEBI:18420"/>
    </ligand>
</feature>
<feature type="binding site" evidence="1">
    <location>
        <position position="291"/>
    </location>
    <ligand>
        <name>N(1)-(5-phospho-beta-D-ribosyl)glycinamide</name>
        <dbReference type="ChEBI" id="CHEBI:143788"/>
    </ligand>
</feature>
<feature type="binding site" evidence="1">
    <location>
        <position position="360"/>
    </location>
    <ligand>
        <name>N(1)-(5-phospho-beta-D-ribosyl)glycinamide</name>
        <dbReference type="ChEBI" id="CHEBI:143788"/>
    </ligand>
</feature>
<feature type="binding site" evidence="1">
    <location>
        <begin position="367"/>
        <end position="368"/>
    </location>
    <ligand>
        <name>N(1)-(5-phospho-beta-D-ribosyl)glycinamide</name>
        <dbReference type="ChEBI" id="CHEBI:143788"/>
    </ligand>
</feature>
<proteinExistence type="inferred from homology"/>
<sequence length="400" mass="42791">MRIGTPNSPSAVRVMLLGSGELGKEVAISLQRYGVEVIAVDRYAGAPAQQVAHRSHVVDMTDPGAIHRLVEFERPHFVVPEIEAIATDALVEIERAGLAEVVPNARAVQLTMNREGIRRLAAEKLGLPTSPYAFADSCAALAEAAAKIGFPCFVKPVMSSSGKGQSLLESPSDVQAAWDHARQGGRVGASRVIVEGRIDFDFEITLLTVRAPVSGGDAGIAFCEPVGHRQQAGDYVESWQPQSLNPKARERAEAIARTVVDALGGRGLFGVELFVRGDEVWFSEVSPRPHDTGMVTMVSQAQNEFELHVRAILGLPVDSSLRRPGASAVIYGGVAAEGIAFEGLERALAVPESEVRLFGKPEAHPRRRMGVALAAADTVEEARRRAVLAASRVRPVKIPA</sequence>
<organism>
    <name type="scientific">Methylococcus capsulatus (strain ATCC 33009 / NCIMB 11132 / Bath)</name>
    <dbReference type="NCBI Taxonomy" id="243233"/>
    <lineage>
        <taxon>Bacteria</taxon>
        <taxon>Pseudomonadati</taxon>
        <taxon>Pseudomonadota</taxon>
        <taxon>Gammaproteobacteria</taxon>
        <taxon>Methylococcales</taxon>
        <taxon>Methylococcaceae</taxon>
        <taxon>Methylococcus</taxon>
    </lineage>
</organism>
<evidence type="ECO:0000255" key="1">
    <source>
        <dbReference type="HAMAP-Rule" id="MF_01643"/>
    </source>
</evidence>
<accession>Q606K7</accession>
<dbReference type="EC" id="6.3.1.21" evidence="1"/>
<dbReference type="EMBL" id="AE017282">
    <property type="protein sequence ID" value="AAU91761.1"/>
    <property type="molecule type" value="Genomic_DNA"/>
</dbReference>
<dbReference type="RefSeq" id="WP_010961254.1">
    <property type="nucleotide sequence ID" value="NC_002977.6"/>
</dbReference>
<dbReference type="SMR" id="Q606K7"/>
<dbReference type="STRING" id="243233.MCA2009"/>
<dbReference type="GeneID" id="88224237"/>
<dbReference type="KEGG" id="mca:MCA2009"/>
<dbReference type="eggNOG" id="COG0027">
    <property type="taxonomic scope" value="Bacteria"/>
</dbReference>
<dbReference type="HOGENOM" id="CLU_011534_1_3_6"/>
<dbReference type="UniPathway" id="UPA00074">
    <property type="reaction ID" value="UER00127"/>
</dbReference>
<dbReference type="Proteomes" id="UP000006821">
    <property type="component" value="Chromosome"/>
</dbReference>
<dbReference type="GO" id="GO:0005829">
    <property type="term" value="C:cytosol"/>
    <property type="evidence" value="ECO:0007669"/>
    <property type="project" value="TreeGrafter"/>
</dbReference>
<dbReference type="GO" id="GO:0005524">
    <property type="term" value="F:ATP binding"/>
    <property type="evidence" value="ECO:0007669"/>
    <property type="project" value="UniProtKB-UniRule"/>
</dbReference>
<dbReference type="GO" id="GO:0000287">
    <property type="term" value="F:magnesium ion binding"/>
    <property type="evidence" value="ECO:0007669"/>
    <property type="project" value="InterPro"/>
</dbReference>
<dbReference type="GO" id="GO:0043815">
    <property type="term" value="F:phosphoribosylglycinamide formyltransferase 2 activity"/>
    <property type="evidence" value="ECO:0007669"/>
    <property type="project" value="UniProtKB-UniRule"/>
</dbReference>
<dbReference type="GO" id="GO:0004644">
    <property type="term" value="F:phosphoribosylglycinamide formyltransferase activity"/>
    <property type="evidence" value="ECO:0007669"/>
    <property type="project" value="InterPro"/>
</dbReference>
<dbReference type="GO" id="GO:0006189">
    <property type="term" value="P:'de novo' IMP biosynthetic process"/>
    <property type="evidence" value="ECO:0007669"/>
    <property type="project" value="UniProtKB-UniRule"/>
</dbReference>
<dbReference type="FunFam" id="3.30.1490.20:FF:000013">
    <property type="entry name" value="Formate-dependent phosphoribosylglycinamide formyltransferase"/>
    <property type="match status" value="1"/>
</dbReference>
<dbReference type="Gene3D" id="3.40.50.20">
    <property type="match status" value="1"/>
</dbReference>
<dbReference type="Gene3D" id="3.30.1490.20">
    <property type="entry name" value="ATP-grasp fold, A domain"/>
    <property type="match status" value="1"/>
</dbReference>
<dbReference type="Gene3D" id="3.30.470.20">
    <property type="entry name" value="ATP-grasp fold, B domain"/>
    <property type="match status" value="1"/>
</dbReference>
<dbReference type="HAMAP" id="MF_01643">
    <property type="entry name" value="PurT"/>
    <property type="match status" value="1"/>
</dbReference>
<dbReference type="InterPro" id="IPR011761">
    <property type="entry name" value="ATP-grasp"/>
</dbReference>
<dbReference type="InterPro" id="IPR003135">
    <property type="entry name" value="ATP-grasp_carboxylate-amine"/>
</dbReference>
<dbReference type="InterPro" id="IPR013815">
    <property type="entry name" value="ATP_grasp_subdomain_1"/>
</dbReference>
<dbReference type="InterPro" id="IPR016185">
    <property type="entry name" value="PreATP-grasp_dom_sf"/>
</dbReference>
<dbReference type="InterPro" id="IPR005862">
    <property type="entry name" value="PurT"/>
</dbReference>
<dbReference type="InterPro" id="IPR054350">
    <property type="entry name" value="PurT/PurK_preATP-grasp"/>
</dbReference>
<dbReference type="InterPro" id="IPR048740">
    <property type="entry name" value="PurT_C"/>
</dbReference>
<dbReference type="InterPro" id="IPR011054">
    <property type="entry name" value="Rudment_hybrid_motif"/>
</dbReference>
<dbReference type="NCBIfam" id="NF006766">
    <property type="entry name" value="PRK09288.1"/>
    <property type="match status" value="1"/>
</dbReference>
<dbReference type="NCBIfam" id="TIGR01142">
    <property type="entry name" value="purT"/>
    <property type="match status" value="1"/>
</dbReference>
<dbReference type="PANTHER" id="PTHR43055">
    <property type="entry name" value="FORMATE-DEPENDENT PHOSPHORIBOSYLGLYCINAMIDE FORMYLTRANSFERASE"/>
    <property type="match status" value="1"/>
</dbReference>
<dbReference type="PANTHER" id="PTHR43055:SF1">
    <property type="entry name" value="FORMATE-DEPENDENT PHOSPHORIBOSYLGLYCINAMIDE FORMYLTRANSFERASE"/>
    <property type="match status" value="1"/>
</dbReference>
<dbReference type="Pfam" id="PF02222">
    <property type="entry name" value="ATP-grasp"/>
    <property type="match status" value="1"/>
</dbReference>
<dbReference type="Pfam" id="PF21244">
    <property type="entry name" value="PurT_C"/>
    <property type="match status" value="1"/>
</dbReference>
<dbReference type="Pfam" id="PF22660">
    <property type="entry name" value="RS_preATP-grasp-like"/>
    <property type="match status" value="1"/>
</dbReference>
<dbReference type="SUPFAM" id="SSF56059">
    <property type="entry name" value="Glutathione synthetase ATP-binding domain-like"/>
    <property type="match status" value="1"/>
</dbReference>
<dbReference type="SUPFAM" id="SSF52440">
    <property type="entry name" value="PreATP-grasp domain"/>
    <property type="match status" value="1"/>
</dbReference>
<dbReference type="SUPFAM" id="SSF51246">
    <property type="entry name" value="Rudiment single hybrid motif"/>
    <property type="match status" value="1"/>
</dbReference>
<dbReference type="PROSITE" id="PS50975">
    <property type="entry name" value="ATP_GRASP"/>
    <property type="match status" value="1"/>
</dbReference>
<comment type="function">
    <text evidence="1">Involved in the de novo purine biosynthesis. Catalyzes the transfer of formate to 5-phospho-ribosyl-glycinamide (GAR), producing 5-phospho-ribosyl-N-formylglycinamide (FGAR). Formate is provided by PurU via hydrolysis of 10-formyl-tetrahydrofolate.</text>
</comment>
<comment type="catalytic activity">
    <reaction evidence="1">
        <text>N(1)-(5-phospho-beta-D-ribosyl)glycinamide + formate + ATP = N(2)-formyl-N(1)-(5-phospho-beta-D-ribosyl)glycinamide + ADP + phosphate + H(+)</text>
        <dbReference type="Rhea" id="RHEA:24829"/>
        <dbReference type="ChEBI" id="CHEBI:15378"/>
        <dbReference type="ChEBI" id="CHEBI:15740"/>
        <dbReference type="ChEBI" id="CHEBI:30616"/>
        <dbReference type="ChEBI" id="CHEBI:43474"/>
        <dbReference type="ChEBI" id="CHEBI:143788"/>
        <dbReference type="ChEBI" id="CHEBI:147286"/>
        <dbReference type="ChEBI" id="CHEBI:456216"/>
        <dbReference type="EC" id="6.3.1.21"/>
    </reaction>
    <physiologicalReaction direction="left-to-right" evidence="1">
        <dbReference type="Rhea" id="RHEA:24830"/>
    </physiologicalReaction>
</comment>
<comment type="pathway">
    <text evidence="1">Purine metabolism; IMP biosynthesis via de novo pathway; N(2)-formyl-N(1)-(5-phospho-D-ribosyl)glycinamide from N(1)-(5-phospho-D-ribosyl)glycinamide (formate route): step 1/1.</text>
</comment>
<comment type="subunit">
    <text evidence="1">Homodimer.</text>
</comment>
<comment type="similarity">
    <text evidence="1">Belongs to the PurK/PurT family.</text>
</comment>
<protein>
    <recommendedName>
        <fullName evidence="1">Formate-dependent phosphoribosylglycinamide formyltransferase</fullName>
        <ecNumber evidence="1">6.3.1.21</ecNumber>
    </recommendedName>
    <alternativeName>
        <fullName evidence="1">5'-phosphoribosylglycinamide transformylase 2</fullName>
    </alternativeName>
    <alternativeName>
        <fullName evidence="1">Formate-dependent GAR transformylase</fullName>
    </alternativeName>
    <alternativeName>
        <fullName evidence="1">GAR transformylase 2</fullName>
        <shortName evidence="1">GART 2</shortName>
    </alternativeName>
    <alternativeName>
        <fullName evidence="1">Non-folate glycinamide ribonucleotide transformylase</fullName>
    </alternativeName>
    <alternativeName>
        <fullName evidence="1">Phosphoribosylglycinamide formyltransferase 2</fullName>
    </alternativeName>
</protein>
<gene>
    <name evidence="1" type="primary">purT</name>
    <name type="ordered locus">MCA2009</name>
</gene>
<name>PURT_METCA</name>
<reference key="1">
    <citation type="journal article" date="2004" name="PLoS Biol.">
        <title>Genomic insights into methanotrophy: the complete genome sequence of Methylococcus capsulatus (Bath).</title>
        <authorList>
            <person name="Ward N.L."/>
            <person name="Larsen O."/>
            <person name="Sakwa J."/>
            <person name="Bruseth L."/>
            <person name="Khouri H.M."/>
            <person name="Durkin A.S."/>
            <person name="Dimitrov G."/>
            <person name="Jiang L."/>
            <person name="Scanlan D."/>
            <person name="Kang K.H."/>
            <person name="Lewis M.R."/>
            <person name="Nelson K.E."/>
            <person name="Methe B.A."/>
            <person name="Wu M."/>
            <person name="Heidelberg J.F."/>
            <person name="Paulsen I.T."/>
            <person name="Fouts D.E."/>
            <person name="Ravel J."/>
            <person name="Tettelin H."/>
            <person name="Ren Q."/>
            <person name="Read T.D."/>
            <person name="DeBoy R.T."/>
            <person name="Seshadri R."/>
            <person name="Salzberg S.L."/>
            <person name="Jensen H.B."/>
            <person name="Birkeland N.K."/>
            <person name="Nelson W.C."/>
            <person name="Dodson R.J."/>
            <person name="Grindhaug S.H."/>
            <person name="Holt I.E."/>
            <person name="Eidhammer I."/>
            <person name="Jonasen I."/>
            <person name="Vanaken S."/>
            <person name="Utterback T.R."/>
            <person name="Feldblyum T.V."/>
            <person name="Fraser C.M."/>
            <person name="Lillehaug J.R."/>
            <person name="Eisen J.A."/>
        </authorList>
    </citation>
    <scope>NUCLEOTIDE SEQUENCE [LARGE SCALE GENOMIC DNA]</scope>
    <source>
        <strain>ATCC 33009 / NCIMB 11132 / Bath</strain>
    </source>
</reference>
<keyword id="KW-0067">ATP-binding</keyword>
<keyword id="KW-0436">Ligase</keyword>
<keyword id="KW-0460">Magnesium</keyword>
<keyword id="KW-0479">Metal-binding</keyword>
<keyword id="KW-0547">Nucleotide-binding</keyword>
<keyword id="KW-0658">Purine biosynthesis</keyword>
<keyword id="KW-1185">Reference proteome</keyword>